<dbReference type="EC" id="1.14.11.2" evidence="8"/>
<dbReference type="EMBL" id="AC026234">
    <property type="protein sequence ID" value="AAF88161.1"/>
    <property type="molecule type" value="Genomic_DNA"/>
</dbReference>
<dbReference type="EMBL" id="CP002684">
    <property type="protein sequence ID" value="AEE29956.1"/>
    <property type="molecule type" value="Genomic_DNA"/>
</dbReference>
<dbReference type="EMBL" id="BT025038">
    <property type="protein sequence ID" value="ABE02413.1"/>
    <property type="molecule type" value="mRNA"/>
</dbReference>
<dbReference type="EMBL" id="AY085158">
    <property type="protein sequence ID" value="AAM61711.1"/>
    <property type="molecule type" value="mRNA"/>
</dbReference>
<dbReference type="PIR" id="D86336">
    <property type="entry name" value="D86336"/>
</dbReference>
<dbReference type="RefSeq" id="NP_564109.1">
    <property type="nucleotide sequence ID" value="NM_101878.4"/>
</dbReference>
<dbReference type="SMR" id="Q9LN20"/>
<dbReference type="FunCoup" id="Q9LN20">
    <property type="interactions" value="195"/>
</dbReference>
<dbReference type="STRING" id="3702.Q9LN20"/>
<dbReference type="GlyCosmos" id="Q9LN20">
    <property type="glycosylation" value="1 site, No reported glycans"/>
</dbReference>
<dbReference type="GlyGen" id="Q9LN20">
    <property type="glycosylation" value="1 site"/>
</dbReference>
<dbReference type="SwissPalm" id="Q9LN20"/>
<dbReference type="PaxDb" id="3702-AT1G20270.1"/>
<dbReference type="ProteomicsDB" id="248728"/>
<dbReference type="EnsemblPlants" id="AT1G20270.1">
    <property type="protein sequence ID" value="AT1G20270.1"/>
    <property type="gene ID" value="AT1G20270"/>
</dbReference>
<dbReference type="GeneID" id="838615"/>
<dbReference type="Gramene" id="AT1G20270.1">
    <property type="protein sequence ID" value="AT1G20270.1"/>
    <property type="gene ID" value="AT1G20270"/>
</dbReference>
<dbReference type="KEGG" id="ath:AT1G20270"/>
<dbReference type="Araport" id="AT1G20270"/>
<dbReference type="TAIR" id="AT1G20270"/>
<dbReference type="eggNOG" id="KOG1591">
    <property type="taxonomic scope" value="Eukaryota"/>
</dbReference>
<dbReference type="HOGENOM" id="CLU_058132_1_2_1"/>
<dbReference type="InParanoid" id="Q9LN20"/>
<dbReference type="OMA" id="GHPGVWH"/>
<dbReference type="PhylomeDB" id="Q9LN20"/>
<dbReference type="BioCyc" id="ARA:AT1G20270-MONOMER"/>
<dbReference type="PRO" id="PR:Q9LN20"/>
<dbReference type="Proteomes" id="UP000006548">
    <property type="component" value="Chromosome 1"/>
</dbReference>
<dbReference type="ExpressionAtlas" id="Q9LN20">
    <property type="expression patterns" value="baseline and differential"/>
</dbReference>
<dbReference type="GO" id="GO:0005789">
    <property type="term" value="C:endoplasmic reticulum membrane"/>
    <property type="evidence" value="ECO:0007669"/>
    <property type="project" value="UniProtKB-SubCell"/>
</dbReference>
<dbReference type="GO" id="GO:0005768">
    <property type="term" value="C:endosome"/>
    <property type="evidence" value="ECO:0007005"/>
    <property type="project" value="TAIR"/>
</dbReference>
<dbReference type="GO" id="GO:0005794">
    <property type="term" value="C:Golgi apparatus"/>
    <property type="evidence" value="ECO:0007005"/>
    <property type="project" value="TAIR"/>
</dbReference>
<dbReference type="GO" id="GO:0000137">
    <property type="term" value="C:Golgi cis cisterna"/>
    <property type="evidence" value="ECO:0007005"/>
    <property type="project" value="TAIR"/>
</dbReference>
<dbReference type="GO" id="GO:0005634">
    <property type="term" value="C:nucleus"/>
    <property type="evidence" value="ECO:0007005"/>
    <property type="project" value="TAIR"/>
</dbReference>
<dbReference type="GO" id="GO:0005802">
    <property type="term" value="C:trans-Golgi network"/>
    <property type="evidence" value="ECO:0007005"/>
    <property type="project" value="TAIR"/>
</dbReference>
<dbReference type="GO" id="GO:0005506">
    <property type="term" value="F:iron ion binding"/>
    <property type="evidence" value="ECO:0007669"/>
    <property type="project" value="InterPro"/>
</dbReference>
<dbReference type="GO" id="GO:0031418">
    <property type="term" value="F:L-ascorbic acid binding"/>
    <property type="evidence" value="ECO:0007669"/>
    <property type="project" value="InterPro"/>
</dbReference>
<dbReference type="GO" id="GO:0004656">
    <property type="term" value="F:procollagen-proline 4-dioxygenase activity"/>
    <property type="evidence" value="ECO:0007669"/>
    <property type="project" value="UniProtKB-EC"/>
</dbReference>
<dbReference type="FunFam" id="2.60.120.620:FF:000002">
    <property type="entry name" value="Prolyl 4-hydroxylase 4"/>
    <property type="match status" value="1"/>
</dbReference>
<dbReference type="Gene3D" id="2.60.120.620">
    <property type="entry name" value="q2cbj1_9rhob like domain"/>
    <property type="match status" value="1"/>
</dbReference>
<dbReference type="InterPro" id="IPR005123">
    <property type="entry name" value="Oxoglu/Fe-dep_dioxygenase_dom"/>
</dbReference>
<dbReference type="InterPro" id="IPR045054">
    <property type="entry name" value="P4HA-like"/>
</dbReference>
<dbReference type="InterPro" id="IPR006620">
    <property type="entry name" value="Pro_4_hyd_alph"/>
</dbReference>
<dbReference type="InterPro" id="IPR044862">
    <property type="entry name" value="Pro_4_hyd_alph_FE2OG_OXY"/>
</dbReference>
<dbReference type="PANTHER" id="PTHR10869:SF239">
    <property type="entry name" value="PROLYL 4-HYDROXYLASE 3-RELATED"/>
    <property type="match status" value="1"/>
</dbReference>
<dbReference type="PANTHER" id="PTHR10869">
    <property type="entry name" value="PROLYL 4-HYDROXYLASE ALPHA SUBUNIT"/>
    <property type="match status" value="1"/>
</dbReference>
<dbReference type="Pfam" id="PF13640">
    <property type="entry name" value="2OG-FeII_Oxy_3"/>
    <property type="match status" value="1"/>
</dbReference>
<dbReference type="SMART" id="SM00702">
    <property type="entry name" value="P4Hc"/>
    <property type="match status" value="1"/>
</dbReference>
<dbReference type="PROSITE" id="PS51471">
    <property type="entry name" value="FE2OG_OXY"/>
    <property type="match status" value="1"/>
</dbReference>
<evidence type="ECO:0000250" key="1">
    <source>
        <dbReference type="UniProtKB" id="Q24JN5"/>
    </source>
</evidence>
<evidence type="ECO:0000250" key="2">
    <source>
        <dbReference type="UniProtKB" id="Q86KR9"/>
    </source>
</evidence>
<evidence type="ECO:0000250" key="3">
    <source>
        <dbReference type="UniProtKB" id="Q9ZW86"/>
    </source>
</evidence>
<evidence type="ECO:0000255" key="4"/>
<evidence type="ECO:0000255" key="5">
    <source>
        <dbReference type="PROSITE-ProRule" id="PRU00498"/>
    </source>
</evidence>
<evidence type="ECO:0000255" key="6">
    <source>
        <dbReference type="PROSITE-ProRule" id="PRU00805"/>
    </source>
</evidence>
<evidence type="ECO:0000303" key="7">
    <source ref="5"/>
</evidence>
<evidence type="ECO:0000305" key="8"/>
<feature type="chain" id="PRO_0000429337" description="Probable prolyl 4-hydroxylase 3">
    <location>
        <begin position="1"/>
        <end position="287"/>
    </location>
</feature>
<feature type="topological domain" description="Cytoplasmic" evidence="8">
    <location>
        <begin position="1"/>
        <end position="16"/>
    </location>
</feature>
<feature type="transmembrane region" description="Helical; Signal-anchor for type II membrane protein" evidence="4">
    <location>
        <begin position="17"/>
        <end position="37"/>
    </location>
</feature>
<feature type="topological domain" description="Lumenal" evidence="8">
    <location>
        <begin position="38"/>
        <end position="287"/>
    </location>
</feature>
<feature type="domain" description="Fe2OG dioxygenase" evidence="6">
    <location>
        <begin position="159"/>
        <end position="282"/>
    </location>
</feature>
<feature type="binding site" evidence="6">
    <location>
        <position position="177"/>
    </location>
    <ligand>
        <name>Fe cation</name>
        <dbReference type="ChEBI" id="CHEBI:24875"/>
    </ligand>
</feature>
<feature type="binding site" evidence="6">
    <location>
        <position position="179"/>
    </location>
    <ligand>
        <name>Fe cation</name>
        <dbReference type="ChEBI" id="CHEBI:24875"/>
    </ligand>
</feature>
<feature type="binding site" evidence="6">
    <location>
        <position position="263"/>
    </location>
    <ligand>
        <name>Fe cation</name>
        <dbReference type="ChEBI" id="CHEBI:24875"/>
    </ligand>
</feature>
<feature type="binding site" evidence="6">
    <location>
        <position position="273"/>
    </location>
    <ligand>
        <name>2-oxoglutarate</name>
        <dbReference type="ChEBI" id="CHEBI:16810"/>
    </ligand>
</feature>
<feature type="glycosylation site" description="N-linked (GlcNAc...) asparagine" evidence="5">
    <location>
        <position position="218"/>
    </location>
</feature>
<feature type="sequence conflict" description="In Ref. 4; AAM61711." evidence="8" ref="4">
    <original>M</original>
    <variation>I</variation>
    <location>
        <position position="280"/>
    </location>
</feature>
<proteinExistence type="evidence at transcript level"/>
<gene>
    <name evidence="7" type="primary">P4H3</name>
    <name type="ordered locus">At1g20270</name>
    <name type="ORF">F14O10.12</name>
</gene>
<comment type="function">
    <text evidence="3">Catalyzes the post-translational formation of 4-hydroxyproline in -Xaa-Pro-Gly- sequences in proline-rich peptide sequences of plant glycoproteins and other proteins. Hydroxyprolines are important constituent of many plant cell wall glycoproteins such as extensins, hydroxyproline-rich glycoproteins, lectins and arabinogalactan proteins.</text>
</comment>
<comment type="catalytic activity">
    <reaction evidence="3">
        <text>L-prolyl-[collagen] + 2-oxoglutarate + O2 = trans-4-hydroxy-L-prolyl-[collagen] + succinate + CO2</text>
        <dbReference type="Rhea" id="RHEA:18945"/>
        <dbReference type="Rhea" id="RHEA-COMP:11676"/>
        <dbReference type="Rhea" id="RHEA-COMP:11680"/>
        <dbReference type="ChEBI" id="CHEBI:15379"/>
        <dbReference type="ChEBI" id="CHEBI:16526"/>
        <dbReference type="ChEBI" id="CHEBI:16810"/>
        <dbReference type="ChEBI" id="CHEBI:30031"/>
        <dbReference type="ChEBI" id="CHEBI:50342"/>
        <dbReference type="ChEBI" id="CHEBI:61965"/>
        <dbReference type="EC" id="1.14.11.2"/>
    </reaction>
</comment>
<comment type="cofactor">
    <cofactor evidence="6">
        <name>Fe(2+)</name>
        <dbReference type="ChEBI" id="CHEBI:29033"/>
    </cofactor>
    <text evidence="6">Binds 1 Fe(2+) ion per subunit.</text>
</comment>
<comment type="cofactor">
    <cofactor evidence="2">
        <name>L-ascorbate</name>
        <dbReference type="ChEBI" id="CHEBI:38290"/>
    </cofactor>
</comment>
<comment type="subcellular location">
    <subcellularLocation>
        <location evidence="1">Endoplasmic reticulum membrane</location>
        <topology evidence="1">Single-pass type II membrane protein</topology>
    </subcellularLocation>
</comment>
<comment type="similarity">
    <text evidence="8">Belongs to the P4HA family.</text>
</comment>
<keyword id="KW-0223">Dioxygenase</keyword>
<keyword id="KW-0256">Endoplasmic reticulum</keyword>
<keyword id="KW-0325">Glycoprotein</keyword>
<keyword id="KW-0408">Iron</keyword>
<keyword id="KW-0472">Membrane</keyword>
<keyword id="KW-0479">Metal-binding</keyword>
<keyword id="KW-0560">Oxidoreductase</keyword>
<keyword id="KW-1185">Reference proteome</keyword>
<keyword id="KW-0735">Signal-anchor</keyword>
<keyword id="KW-0812">Transmembrane</keyword>
<keyword id="KW-1133">Transmembrane helix</keyword>
<name>P4H3_ARATH</name>
<protein>
    <recommendedName>
        <fullName evidence="8">Probable prolyl 4-hydroxylase 3</fullName>
        <shortName evidence="7">AtP4H3</shortName>
        <ecNumber evidence="8">1.14.11.2</ecNumber>
    </recommendedName>
</protein>
<organism>
    <name type="scientific">Arabidopsis thaliana</name>
    <name type="common">Mouse-ear cress</name>
    <dbReference type="NCBI Taxonomy" id="3702"/>
    <lineage>
        <taxon>Eukaryota</taxon>
        <taxon>Viridiplantae</taxon>
        <taxon>Streptophyta</taxon>
        <taxon>Embryophyta</taxon>
        <taxon>Tracheophyta</taxon>
        <taxon>Spermatophyta</taxon>
        <taxon>Magnoliopsida</taxon>
        <taxon>eudicotyledons</taxon>
        <taxon>Gunneridae</taxon>
        <taxon>Pentapetalae</taxon>
        <taxon>rosids</taxon>
        <taxon>malvids</taxon>
        <taxon>Brassicales</taxon>
        <taxon>Brassicaceae</taxon>
        <taxon>Camelineae</taxon>
        <taxon>Arabidopsis</taxon>
    </lineage>
</organism>
<sequence>MAKLRHSRFQARKWSTLMLVLFMLFMLTIVLLMLLAFGVFSLPINNDESSPIDLSYFRRAATERSEGLGKRGDQWTEVLSWEPRAFVYHNFLSKEECEYLISLAKPHMVKSTVVDSETGKSKDSRVRTSSGTFLRRGRDKIIKTIEKRIADYTFIPADHGEGLQVLHYEAGQKYEPHYDYFVDEFNTKNGGQRMATMLMYLSDVEEGGETVFPAANMNFSSVPWYNELSECGKKGLSVKPRMGDALLFWSMRPDATLDPTSLHGGCPVIRGNKWSSTKWMHVGEYKI</sequence>
<accession>Q9LN20</accession>
<accession>Q8LEY1</accession>
<reference key="1">
    <citation type="journal article" date="2000" name="Nature">
        <title>Sequence and analysis of chromosome 1 of the plant Arabidopsis thaliana.</title>
        <authorList>
            <person name="Theologis A."/>
            <person name="Ecker J.R."/>
            <person name="Palm C.J."/>
            <person name="Federspiel N.A."/>
            <person name="Kaul S."/>
            <person name="White O."/>
            <person name="Alonso J."/>
            <person name="Altafi H."/>
            <person name="Araujo R."/>
            <person name="Bowman C.L."/>
            <person name="Brooks S.Y."/>
            <person name="Buehler E."/>
            <person name="Chan A."/>
            <person name="Chao Q."/>
            <person name="Chen H."/>
            <person name="Cheuk R.F."/>
            <person name="Chin C.W."/>
            <person name="Chung M.K."/>
            <person name="Conn L."/>
            <person name="Conway A.B."/>
            <person name="Conway A.R."/>
            <person name="Creasy T.H."/>
            <person name="Dewar K."/>
            <person name="Dunn P."/>
            <person name="Etgu P."/>
            <person name="Feldblyum T.V."/>
            <person name="Feng J.-D."/>
            <person name="Fong B."/>
            <person name="Fujii C.Y."/>
            <person name="Gill J.E."/>
            <person name="Goldsmith A.D."/>
            <person name="Haas B."/>
            <person name="Hansen N.F."/>
            <person name="Hughes B."/>
            <person name="Huizar L."/>
            <person name="Hunter J.L."/>
            <person name="Jenkins J."/>
            <person name="Johnson-Hopson C."/>
            <person name="Khan S."/>
            <person name="Khaykin E."/>
            <person name="Kim C.J."/>
            <person name="Koo H.L."/>
            <person name="Kremenetskaia I."/>
            <person name="Kurtz D.B."/>
            <person name="Kwan A."/>
            <person name="Lam B."/>
            <person name="Langin-Hooper S."/>
            <person name="Lee A."/>
            <person name="Lee J.M."/>
            <person name="Lenz C.A."/>
            <person name="Li J.H."/>
            <person name="Li Y.-P."/>
            <person name="Lin X."/>
            <person name="Liu S.X."/>
            <person name="Liu Z.A."/>
            <person name="Luros J.S."/>
            <person name="Maiti R."/>
            <person name="Marziali A."/>
            <person name="Militscher J."/>
            <person name="Miranda M."/>
            <person name="Nguyen M."/>
            <person name="Nierman W.C."/>
            <person name="Osborne B.I."/>
            <person name="Pai G."/>
            <person name="Peterson J."/>
            <person name="Pham P.K."/>
            <person name="Rizzo M."/>
            <person name="Rooney T."/>
            <person name="Rowley D."/>
            <person name="Sakano H."/>
            <person name="Salzberg S.L."/>
            <person name="Schwartz J.R."/>
            <person name="Shinn P."/>
            <person name="Southwick A.M."/>
            <person name="Sun H."/>
            <person name="Tallon L.J."/>
            <person name="Tambunga G."/>
            <person name="Toriumi M.J."/>
            <person name="Town C.D."/>
            <person name="Utterback T."/>
            <person name="Van Aken S."/>
            <person name="Vaysberg M."/>
            <person name="Vysotskaia V.S."/>
            <person name="Walker M."/>
            <person name="Wu D."/>
            <person name="Yu G."/>
            <person name="Fraser C.M."/>
            <person name="Venter J.C."/>
            <person name="Davis R.W."/>
        </authorList>
    </citation>
    <scope>NUCLEOTIDE SEQUENCE [LARGE SCALE GENOMIC DNA]</scope>
    <source>
        <strain>cv. Columbia</strain>
    </source>
</reference>
<reference key="2">
    <citation type="journal article" date="2017" name="Plant J.">
        <title>Araport11: a complete reannotation of the Arabidopsis thaliana reference genome.</title>
        <authorList>
            <person name="Cheng C.Y."/>
            <person name="Krishnakumar V."/>
            <person name="Chan A.P."/>
            <person name="Thibaud-Nissen F."/>
            <person name="Schobel S."/>
            <person name="Town C.D."/>
        </authorList>
    </citation>
    <scope>GENOME REANNOTATION</scope>
    <source>
        <strain>cv. Columbia</strain>
    </source>
</reference>
<reference key="3">
    <citation type="submission" date="2006-04" db="EMBL/GenBank/DDBJ databases">
        <title>Arabidopsis ORF clones.</title>
        <authorList>
            <person name="Shinn P."/>
            <person name="Chen H."/>
            <person name="Kim C.J."/>
            <person name="Ecker J.R."/>
        </authorList>
    </citation>
    <scope>NUCLEOTIDE SEQUENCE [LARGE SCALE MRNA]</scope>
    <source>
        <strain>cv. Columbia</strain>
    </source>
</reference>
<reference key="4">
    <citation type="submission" date="2002-03" db="EMBL/GenBank/DDBJ databases">
        <title>Full-length cDNA from Arabidopsis thaliana.</title>
        <authorList>
            <person name="Brover V.V."/>
            <person name="Troukhan M.E."/>
            <person name="Alexandrov N.A."/>
            <person name="Lu Y.-P."/>
            <person name="Flavell R.B."/>
            <person name="Feldmann K.A."/>
        </authorList>
    </citation>
    <scope>NUCLEOTIDE SEQUENCE [LARGE SCALE MRNA]</scope>
</reference>
<reference key="5">
    <citation type="journal article" date="2007" name="Physiol. Plantarum">
        <title>Arabidopsis prolyl 4-hydroxylases are differentially expressed in response to hypoxia, anoxia and mechanical wounding.</title>
        <authorList>
            <person name="Vlad F."/>
            <person name="Spano T."/>
            <person name="Vlad D."/>
            <person name="Bou Daher F."/>
            <person name="Ouelhadj A."/>
            <person name="Kalaitzis P."/>
        </authorList>
    </citation>
    <scope>GENE FAMILY</scope>
    <scope>NOMENCLATURE</scope>
</reference>